<sequence length="627" mass="71871">MAAAELTAPAQGIVTFEDVAVYFSWKEWGLLDEAQKCLYHDVMLENLTLTTSLGGSGAGDEEAPYQQSTSPQRVSQVRIPKALPSPQKTNPCEICGPVLRQILHLVEHQGTHHGQKLYTDGACRKQLQFTAYLHQHQKQHVGQKHFRSNGGRDMFLSSCTFEVSGKPFTCKEVGKDFLVRSRFLQQQAAHTRKKSNRTKSAVAFHSVKNHYNWGECVKAFSYKHVRVQHQGDLIRERSYMCSECGKSFSTSCSLSDHLRVHTSEKPYTCGECGKSYRQSSSLITHRRIHTGVRPHQCDECGKLFNRKYDLLIHQRVHTGERPYKCSECGKSFSHSSSLITHQRIHTGMRPYECSECGKSFIHSSSLITHQRVHTGTRPYMCSECGKSFSQSCHLIKHRRLHIGEGPYECSECGKLFTYRSRFFQHQRVHTGVRSHECHECGKLFSRKFDLIVHERVHTGERPYECSECGKSFTCKSYLISHWKVHTGARPYECGECGKSFTHSSTLLQHQRVHTGERPYECNECGKFFSQSSSLIRHRRSHTGERPYECSECWKSFSNHSSLVKHRRVHTGERPYECSECGKSFSQSSNLTNHQRIHSGERPYECSDCGKFFTFNSNLLKHQNVHKG</sequence>
<comment type="function">
    <text evidence="4">Transcriptional repressor that plays a role in cell proliferation. Requires TRIM28 for its activity.</text>
</comment>
<comment type="subunit">
    <text evidence="4">Interacts with TRIM28.</text>
</comment>
<comment type="interaction">
    <interactant intactId="EBI-12223065">
        <id>Q9Y2P7</id>
    </interactant>
    <interactant intactId="EBI-10172290">
        <id>P60409</id>
        <label>KRTAP10-7</label>
    </interactant>
    <organismsDiffer>false</organismsDiffer>
    <experiments>3</experiments>
</comment>
<comment type="subcellular location">
    <subcellularLocation>
        <location evidence="4">Nucleus</location>
    </subcellularLocation>
</comment>
<comment type="alternative products">
    <event type="alternative splicing"/>
    <isoform>
        <id>Q9Y2P7-1</id>
        <name>1</name>
        <sequence type="displayed"/>
    </isoform>
    <isoform>
        <id>Q9Y2P7-2</id>
        <name>2</name>
        <sequence type="described" ref="VSP_037721"/>
    </isoform>
</comment>
<comment type="induction">
    <text evidence="4">By GDNF/glial cell line-derived neurotrophic factor.</text>
</comment>
<comment type="domain">
    <text evidence="4">The KRAB domain mediates interaction with TRIM28 and is required for transcriptional repressor activity.</text>
</comment>
<comment type="similarity">
    <text evidence="8">Belongs to the krueppel C2H2-type zinc-finger protein family.</text>
</comment>
<feature type="chain" id="PRO_0000047489" description="Zinc finger protein 256">
    <location>
        <begin position="1"/>
        <end position="627"/>
    </location>
</feature>
<feature type="domain" description="KRAB" evidence="2">
    <location>
        <begin position="14"/>
        <end position="96"/>
    </location>
</feature>
<feature type="zinc finger region" description="C2H2-type 1" evidence="1">
    <location>
        <begin position="90"/>
        <end position="112"/>
    </location>
</feature>
<feature type="zinc finger region" description="C2H2-type 2" evidence="1">
    <location>
        <begin position="239"/>
        <end position="261"/>
    </location>
</feature>
<feature type="zinc finger region" description="C2H2-type 3" evidence="1">
    <location>
        <begin position="267"/>
        <end position="289"/>
    </location>
</feature>
<feature type="zinc finger region" description="C2H2-type 4" evidence="1">
    <location>
        <begin position="295"/>
        <end position="317"/>
    </location>
</feature>
<feature type="zinc finger region" description="C2H2-type 5" evidence="1">
    <location>
        <begin position="323"/>
        <end position="345"/>
    </location>
</feature>
<feature type="zinc finger region" description="C2H2-type 6" evidence="1">
    <location>
        <begin position="351"/>
        <end position="373"/>
    </location>
</feature>
<feature type="zinc finger region" description="C2H2-type 7" evidence="1">
    <location>
        <begin position="379"/>
        <end position="401"/>
    </location>
</feature>
<feature type="zinc finger region" description="C2H2-type 8" evidence="1">
    <location>
        <begin position="407"/>
        <end position="429"/>
    </location>
</feature>
<feature type="zinc finger region" description="C2H2-type 9" evidence="1">
    <location>
        <begin position="435"/>
        <end position="457"/>
    </location>
</feature>
<feature type="zinc finger region" description="C2H2-type 10" evidence="1">
    <location>
        <begin position="463"/>
        <end position="485"/>
    </location>
</feature>
<feature type="zinc finger region" description="C2H2-type 11" evidence="1">
    <location>
        <begin position="491"/>
        <end position="513"/>
    </location>
</feature>
<feature type="zinc finger region" description="C2H2-type 12" evidence="1">
    <location>
        <begin position="519"/>
        <end position="541"/>
    </location>
</feature>
<feature type="zinc finger region" description="C2H2-type 13" evidence="1">
    <location>
        <begin position="547"/>
        <end position="569"/>
    </location>
</feature>
<feature type="zinc finger region" description="C2H2-type 14" evidence="1">
    <location>
        <begin position="575"/>
        <end position="597"/>
    </location>
</feature>
<feature type="zinc finger region" description="C2H2-type 15" evidence="1">
    <location>
        <begin position="603"/>
        <end position="625"/>
    </location>
</feature>
<feature type="region of interest" description="Disordered" evidence="3">
    <location>
        <begin position="55"/>
        <end position="76"/>
    </location>
</feature>
<feature type="compositionally biased region" description="Polar residues" evidence="3">
    <location>
        <begin position="65"/>
        <end position="75"/>
    </location>
</feature>
<feature type="splice variant" id="VSP_037721" description="In isoform 2." evidence="5 6 7">
    <location>
        <begin position="1"/>
        <end position="153"/>
    </location>
</feature>
<feature type="sequence variant" id="VAR_058326" description="In dbSNP:rs953619.">
    <original>F</original>
    <variation>I</variation>
    <location>
        <position position="304"/>
    </location>
</feature>
<feature type="sequence conflict" description="In Ref. 3; BAG36789." evidence="8" ref="3">
    <original>L</original>
    <variation>P</variation>
    <location>
        <position position="254"/>
    </location>
</feature>
<feature type="sequence conflict" description="In Ref. 3; BAG36789." evidence="8" ref="3">
    <original>C</original>
    <variation>F</variation>
    <location>
        <position position="552"/>
    </location>
</feature>
<feature type="sequence conflict" description="In Ref. 1; AAD32449." evidence="8" ref="1">
    <original>P</original>
    <variation>L</variation>
    <location>
        <position position="574"/>
    </location>
</feature>
<keyword id="KW-0025">Alternative splicing</keyword>
<keyword id="KW-0238">DNA-binding</keyword>
<keyword id="KW-0479">Metal-binding</keyword>
<keyword id="KW-0539">Nucleus</keyword>
<keyword id="KW-1267">Proteomics identification</keyword>
<keyword id="KW-1185">Reference proteome</keyword>
<keyword id="KW-0677">Repeat</keyword>
<keyword id="KW-0678">Repressor</keyword>
<keyword id="KW-0804">Transcription</keyword>
<keyword id="KW-0805">Transcription regulation</keyword>
<keyword id="KW-0862">Zinc</keyword>
<keyword id="KW-0863">Zinc-finger</keyword>
<evidence type="ECO:0000255" key="1">
    <source>
        <dbReference type="PROSITE-ProRule" id="PRU00042"/>
    </source>
</evidence>
<evidence type="ECO:0000255" key="2">
    <source>
        <dbReference type="PROSITE-ProRule" id="PRU00119"/>
    </source>
</evidence>
<evidence type="ECO:0000256" key="3">
    <source>
        <dbReference type="SAM" id="MobiDB-lite"/>
    </source>
</evidence>
<evidence type="ECO:0000269" key="4">
    <source>
    </source>
</evidence>
<evidence type="ECO:0000303" key="5">
    <source>
    </source>
</evidence>
<evidence type="ECO:0000303" key="6">
    <source>
    </source>
</evidence>
<evidence type="ECO:0000303" key="7">
    <source ref="2"/>
</evidence>
<evidence type="ECO:0000305" key="8"/>
<organism>
    <name type="scientific">Homo sapiens</name>
    <name type="common">Human</name>
    <dbReference type="NCBI Taxonomy" id="9606"/>
    <lineage>
        <taxon>Eukaryota</taxon>
        <taxon>Metazoa</taxon>
        <taxon>Chordata</taxon>
        <taxon>Craniata</taxon>
        <taxon>Vertebrata</taxon>
        <taxon>Euteleostomi</taxon>
        <taxon>Mammalia</taxon>
        <taxon>Eutheria</taxon>
        <taxon>Euarchontoglires</taxon>
        <taxon>Primates</taxon>
        <taxon>Haplorrhini</taxon>
        <taxon>Catarrhini</taxon>
        <taxon>Hominidae</taxon>
        <taxon>Homo</taxon>
    </lineage>
</organism>
<name>ZN256_HUMAN</name>
<accession>Q9Y2P7</accession>
<accession>B2RA92</accession>
<accession>Q53Y85</accession>
<accession>Q9BV71</accession>
<protein>
    <recommendedName>
        <fullName>Zinc finger protein 256</fullName>
    </recommendedName>
    <alternativeName>
        <fullName>Bone marrow zinc finger 3</fullName>
        <shortName>BMZF-3</shortName>
    </alternativeName>
</protein>
<proteinExistence type="evidence at protein level"/>
<gene>
    <name type="primary">ZNF256</name>
    <name type="synonym">BMZF3</name>
</gene>
<reference key="1">
    <citation type="journal article" date="1999" name="J. Biol. Chem.">
        <title>Molecular cloning of six novel Kruppel-like zinc finger genes from hematopoietic cells and identification of a novel transregulatory domain KRNB.</title>
        <authorList>
            <person name="Han Z.-G."/>
            <person name="Zhang Q.-H."/>
            <person name="Ye M."/>
            <person name="Kan L.-X."/>
            <person name="Gu B.-W."/>
            <person name="He K.-L."/>
            <person name="Shi S.-L."/>
            <person name="Zhou J."/>
            <person name="Fu G."/>
            <person name="Mao M."/>
            <person name="Chen S.-J."/>
            <person name="Yu L."/>
            <person name="Chen Z."/>
        </authorList>
    </citation>
    <scope>NUCLEOTIDE SEQUENCE [MRNA] (ISOFORM 2)</scope>
    <source>
        <tissue>Bone marrow</tissue>
    </source>
</reference>
<reference key="2">
    <citation type="submission" date="2003-05" db="EMBL/GenBank/DDBJ databases">
        <title>Cloning of human full-length CDSs in BD Creator(TM) system donor vector.</title>
        <authorList>
            <person name="Kalnine N."/>
            <person name="Chen X."/>
            <person name="Rolfs A."/>
            <person name="Halleck A."/>
            <person name="Hines L."/>
            <person name="Eisenstein S."/>
            <person name="Koundinya M."/>
            <person name="Raphael J."/>
            <person name="Moreira D."/>
            <person name="Kelley T."/>
            <person name="LaBaer J."/>
            <person name="Lin Y."/>
            <person name="Phelan M."/>
            <person name="Farmer A."/>
        </authorList>
    </citation>
    <scope>NUCLEOTIDE SEQUENCE [LARGE SCALE MRNA] (ISOFORM 2)</scope>
</reference>
<reference key="3">
    <citation type="journal article" date="2004" name="Nat. Genet.">
        <title>Complete sequencing and characterization of 21,243 full-length human cDNAs.</title>
        <authorList>
            <person name="Ota T."/>
            <person name="Suzuki Y."/>
            <person name="Nishikawa T."/>
            <person name="Otsuki T."/>
            <person name="Sugiyama T."/>
            <person name="Irie R."/>
            <person name="Wakamatsu A."/>
            <person name="Hayashi K."/>
            <person name="Sato H."/>
            <person name="Nagai K."/>
            <person name="Kimura K."/>
            <person name="Makita H."/>
            <person name="Sekine M."/>
            <person name="Obayashi M."/>
            <person name="Nishi T."/>
            <person name="Shibahara T."/>
            <person name="Tanaka T."/>
            <person name="Ishii S."/>
            <person name="Yamamoto J."/>
            <person name="Saito K."/>
            <person name="Kawai Y."/>
            <person name="Isono Y."/>
            <person name="Nakamura Y."/>
            <person name="Nagahari K."/>
            <person name="Murakami K."/>
            <person name="Yasuda T."/>
            <person name="Iwayanagi T."/>
            <person name="Wagatsuma M."/>
            <person name="Shiratori A."/>
            <person name="Sudo H."/>
            <person name="Hosoiri T."/>
            <person name="Kaku Y."/>
            <person name="Kodaira H."/>
            <person name="Kondo H."/>
            <person name="Sugawara M."/>
            <person name="Takahashi M."/>
            <person name="Kanda K."/>
            <person name="Yokoi T."/>
            <person name="Furuya T."/>
            <person name="Kikkawa E."/>
            <person name="Omura Y."/>
            <person name="Abe K."/>
            <person name="Kamihara K."/>
            <person name="Katsuta N."/>
            <person name="Sato K."/>
            <person name="Tanikawa M."/>
            <person name="Yamazaki M."/>
            <person name="Ninomiya K."/>
            <person name="Ishibashi T."/>
            <person name="Yamashita H."/>
            <person name="Murakawa K."/>
            <person name="Fujimori K."/>
            <person name="Tanai H."/>
            <person name="Kimata M."/>
            <person name="Watanabe M."/>
            <person name="Hiraoka S."/>
            <person name="Chiba Y."/>
            <person name="Ishida S."/>
            <person name="Ono Y."/>
            <person name="Takiguchi S."/>
            <person name="Watanabe S."/>
            <person name="Yosida M."/>
            <person name="Hotuta T."/>
            <person name="Kusano J."/>
            <person name="Kanehori K."/>
            <person name="Takahashi-Fujii A."/>
            <person name="Hara H."/>
            <person name="Tanase T.-O."/>
            <person name="Nomura Y."/>
            <person name="Togiya S."/>
            <person name="Komai F."/>
            <person name="Hara R."/>
            <person name="Takeuchi K."/>
            <person name="Arita M."/>
            <person name="Imose N."/>
            <person name="Musashino K."/>
            <person name="Yuuki H."/>
            <person name="Oshima A."/>
            <person name="Sasaki N."/>
            <person name="Aotsuka S."/>
            <person name="Yoshikawa Y."/>
            <person name="Matsunawa H."/>
            <person name="Ichihara T."/>
            <person name="Shiohata N."/>
            <person name="Sano S."/>
            <person name="Moriya S."/>
            <person name="Momiyama H."/>
            <person name="Satoh N."/>
            <person name="Takami S."/>
            <person name="Terashima Y."/>
            <person name="Suzuki O."/>
            <person name="Nakagawa S."/>
            <person name="Senoh A."/>
            <person name="Mizoguchi H."/>
            <person name="Goto Y."/>
            <person name="Shimizu F."/>
            <person name="Wakebe H."/>
            <person name="Hishigaki H."/>
            <person name="Watanabe T."/>
            <person name="Sugiyama A."/>
            <person name="Takemoto M."/>
            <person name="Kawakami B."/>
            <person name="Yamazaki M."/>
            <person name="Watanabe K."/>
            <person name="Kumagai A."/>
            <person name="Itakura S."/>
            <person name="Fukuzumi Y."/>
            <person name="Fujimori Y."/>
            <person name="Komiyama M."/>
            <person name="Tashiro H."/>
            <person name="Tanigami A."/>
            <person name="Fujiwara T."/>
            <person name="Ono T."/>
            <person name="Yamada K."/>
            <person name="Fujii Y."/>
            <person name="Ozaki K."/>
            <person name="Hirao M."/>
            <person name="Ohmori Y."/>
            <person name="Kawabata A."/>
            <person name="Hikiji T."/>
            <person name="Kobatake N."/>
            <person name="Inagaki H."/>
            <person name="Ikema Y."/>
            <person name="Okamoto S."/>
            <person name="Okitani R."/>
            <person name="Kawakami T."/>
            <person name="Noguchi S."/>
            <person name="Itoh T."/>
            <person name="Shigeta K."/>
            <person name="Senba T."/>
            <person name="Matsumura K."/>
            <person name="Nakajima Y."/>
            <person name="Mizuno T."/>
            <person name="Morinaga M."/>
            <person name="Sasaki M."/>
            <person name="Togashi T."/>
            <person name="Oyama M."/>
            <person name="Hata H."/>
            <person name="Watanabe M."/>
            <person name="Komatsu T."/>
            <person name="Mizushima-Sugano J."/>
            <person name="Satoh T."/>
            <person name="Shirai Y."/>
            <person name="Takahashi Y."/>
            <person name="Nakagawa K."/>
            <person name="Okumura K."/>
            <person name="Nagase T."/>
            <person name="Nomura N."/>
            <person name="Kikuchi H."/>
            <person name="Masuho Y."/>
            <person name="Yamashita R."/>
            <person name="Nakai K."/>
            <person name="Yada T."/>
            <person name="Nakamura Y."/>
            <person name="Ohara O."/>
            <person name="Isogai T."/>
            <person name="Sugano S."/>
        </authorList>
    </citation>
    <scope>NUCLEOTIDE SEQUENCE [LARGE SCALE MRNA] (ISOFORM 2)</scope>
    <source>
        <tissue>Tongue</tissue>
    </source>
</reference>
<reference key="4">
    <citation type="journal article" date="2004" name="Nature">
        <title>The DNA sequence and biology of human chromosome 19.</title>
        <authorList>
            <person name="Grimwood J."/>
            <person name="Gordon L.A."/>
            <person name="Olsen A.S."/>
            <person name="Terry A."/>
            <person name="Schmutz J."/>
            <person name="Lamerdin J.E."/>
            <person name="Hellsten U."/>
            <person name="Goodstein D."/>
            <person name="Couronne O."/>
            <person name="Tran-Gyamfi M."/>
            <person name="Aerts A."/>
            <person name="Altherr M."/>
            <person name="Ashworth L."/>
            <person name="Bajorek E."/>
            <person name="Black S."/>
            <person name="Branscomb E."/>
            <person name="Caenepeel S."/>
            <person name="Carrano A.V."/>
            <person name="Caoile C."/>
            <person name="Chan Y.M."/>
            <person name="Christensen M."/>
            <person name="Cleland C.A."/>
            <person name="Copeland A."/>
            <person name="Dalin E."/>
            <person name="Dehal P."/>
            <person name="Denys M."/>
            <person name="Detter J.C."/>
            <person name="Escobar J."/>
            <person name="Flowers D."/>
            <person name="Fotopulos D."/>
            <person name="Garcia C."/>
            <person name="Georgescu A.M."/>
            <person name="Glavina T."/>
            <person name="Gomez M."/>
            <person name="Gonzales E."/>
            <person name="Groza M."/>
            <person name="Hammon N."/>
            <person name="Hawkins T."/>
            <person name="Haydu L."/>
            <person name="Ho I."/>
            <person name="Huang W."/>
            <person name="Israni S."/>
            <person name="Jett J."/>
            <person name="Kadner K."/>
            <person name="Kimball H."/>
            <person name="Kobayashi A."/>
            <person name="Larionov V."/>
            <person name="Leem S.-H."/>
            <person name="Lopez F."/>
            <person name="Lou Y."/>
            <person name="Lowry S."/>
            <person name="Malfatti S."/>
            <person name="Martinez D."/>
            <person name="McCready P.M."/>
            <person name="Medina C."/>
            <person name="Morgan J."/>
            <person name="Nelson K."/>
            <person name="Nolan M."/>
            <person name="Ovcharenko I."/>
            <person name="Pitluck S."/>
            <person name="Pollard M."/>
            <person name="Popkie A.P."/>
            <person name="Predki P."/>
            <person name="Quan G."/>
            <person name="Ramirez L."/>
            <person name="Rash S."/>
            <person name="Retterer J."/>
            <person name="Rodriguez A."/>
            <person name="Rogers S."/>
            <person name="Salamov A."/>
            <person name="Salazar A."/>
            <person name="She X."/>
            <person name="Smith D."/>
            <person name="Slezak T."/>
            <person name="Solovyev V."/>
            <person name="Thayer N."/>
            <person name="Tice H."/>
            <person name="Tsai M."/>
            <person name="Ustaszewska A."/>
            <person name="Vo N."/>
            <person name="Wagner M."/>
            <person name="Wheeler J."/>
            <person name="Wu K."/>
            <person name="Xie G."/>
            <person name="Yang J."/>
            <person name="Dubchak I."/>
            <person name="Furey T.S."/>
            <person name="DeJong P."/>
            <person name="Dickson M."/>
            <person name="Gordon D."/>
            <person name="Eichler E.E."/>
            <person name="Pennacchio L.A."/>
            <person name="Richardson P."/>
            <person name="Stubbs L."/>
            <person name="Rokhsar D.S."/>
            <person name="Myers R.M."/>
            <person name="Rubin E.M."/>
            <person name="Lucas S.M."/>
        </authorList>
    </citation>
    <scope>NUCLEOTIDE SEQUENCE [LARGE SCALE GENOMIC DNA]</scope>
</reference>
<reference key="5">
    <citation type="journal article" date="2004" name="Genome Res.">
        <title>The status, quality, and expansion of the NIH full-length cDNA project: the Mammalian Gene Collection (MGC).</title>
        <authorList>
            <consortium name="The MGC Project Team"/>
        </authorList>
    </citation>
    <scope>NUCLEOTIDE SEQUENCE [LARGE SCALE MRNA] (ISOFORM 1)</scope>
    <source>
        <tissue>Placenta</tissue>
    </source>
</reference>
<reference key="6">
    <citation type="journal article" date="2008" name="Biochem. Biophys. Res. Commun.">
        <title>A novel GDNF-inducible gene, BMZF3, encodes a transcriptional repressor associated with KAP-1.</title>
        <authorList>
            <person name="Suzuki C."/>
            <person name="Murakumo Y."/>
            <person name="Kawase Y."/>
            <person name="Sato T."/>
            <person name="Morinaga T."/>
            <person name="Fukuda N."/>
            <person name="Enomoto A."/>
            <person name="Ichihara M."/>
            <person name="Takahashi M."/>
        </authorList>
    </citation>
    <scope>FUNCTION</scope>
    <scope>INDUCTION</scope>
    <scope>SUBCELLULAR LOCATION</scope>
    <scope>DOMAIN</scope>
    <scope>INTERACTION WITH TRIM28</scope>
</reference>
<dbReference type="EMBL" id="AF067165">
    <property type="protein sequence ID" value="AAD32449.1"/>
    <property type="molecule type" value="mRNA"/>
</dbReference>
<dbReference type="EMBL" id="BT006853">
    <property type="protein sequence ID" value="AAP35499.1"/>
    <property type="molecule type" value="mRNA"/>
</dbReference>
<dbReference type="EMBL" id="AK314094">
    <property type="protein sequence ID" value="BAG36789.1"/>
    <property type="molecule type" value="mRNA"/>
</dbReference>
<dbReference type="EMBL" id="AC008969">
    <property type="status" value="NOT_ANNOTATED_CDS"/>
    <property type="molecule type" value="Genomic_DNA"/>
</dbReference>
<dbReference type="EMBL" id="AC010326">
    <property type="status" value="NOT_ANNOTATED_CDS"/>
    <property type="molecule type" value="Genomic_DNA"/>
</dbReference>
<dbReference type="EMBL" id="BC001438">
    <property type="protein sequence ID" value="AAH01438.2"/>
    <property type="molecule type" value="mRNA"/>
</dbReference>
<dbReference type="CCDS" id="CCDS12966.1">
    <molecule id="Q9Y2P7-1"/>
</dbReference>
<dbReference type="RefSeq" id="NP_001362332.1">
    <molecule id="Q9Y2P7-2"/>
    <property type="nucleotide sequence ID" value="NM_001375403.1"/>
</dbReference>
<dbReference type="RefSeq" id="NP_005764.2">
    <molecule id="Q9Y2P7-1"/>
    <property type="nucleotide sequence ID" value="NM_005773.2"/>
</dbReference>
<dbReference type="RefSeq" id="XP_016881627.1">
    <property type="nucleotide sequence ID" value="XM_017026138.1"/>
</dbReference>
<dbReference type="SMR" id="Q9Y2P7"/>
<dbReference type="BioGRID" id="115474">
    <property type="interactions" value="6"/>
</dbReference>
<dbReference type="FunCoup" id="Q9Y2P7">
    <property type="interactions" value="1124"/>
</dbReference>
<dbReference type="IntAct" id="Q9Y2P7">
    <property type="interactions" value="3"/>
</dbReference>
<dbReference type="STRING" id="9606.ENSP00000282308"/>
<dbReference type="iPTMnet" id="Q9Y2P7"/>
<dbReference type="PhosphoSitePlus" id="Q9Y2P7"/>
<dbReference type="BioMuta" id="ZNF256"/>
<dbReference type="DMDM" id="254763378"/>
<dbReference type="jPOST" id="Q9Y2P7"/>
<dbReference type="MassIVE" id="Q9Y2P7"/>
<dbReference type="PaxDb" id="9606-ENSP00000282308"/>
<dbReference type="PeptideAtlas" id="Q9Y2P7"/>
<dbReference type="ProteomicsDB" id="85855">
    <molecule id="Q9Y2P7-1"/>
</dbReference>
<dbReference type="ProteomicsDB" id="85856">
    <molecule id="Q9Y2P7-2"/>
</dbReference>
<dbReference type="Antibodypedia" id="33319">
    <property type="antibodies" value="123 antibodies from 22 providers"/>
</dbReference>
<dbReference type="DNASU" id="10172"/>
<dbReference type="Ensembl" id="ENST00000282308.4">
    <molecule id="Q9Y2P7-1"/>
    <property type="protein sequence ID" value="ENSP00000282308.2"/>
    <property type="gene ID" value="ENSG00000152454.4"/>
</dbReference>
<dbReference type="GeneID" id="10172"/>
<dbReference type="KEGG" id="hsa:10172"/>
<dbReference type="MANE-Select" id="ENST00000282308.4">
    <property type="protein sequence ID" value="ENSP00000282308.2"/>
    <property type="RefSeq nucleotide sequence ID" value="NM_005773.3"/>
    <property type="RefSeq protein sequence ID" value="NP_005764.2"/>
</dbReference>
<dbReference type="UCSC" id="uc002qqu.4">
    <molecule id="Q9Y2P7-1"/>
    <property type="organism name" value="human"/>
</dbReference>
<dbReference type="AGR" id="HGNC:13049"/>
<dbReference type="CTD" id="10172"/>
<dbReference type="DisGeNET" id="10172"/>
<dbReference type="GeneCards" id="ZNF256"/>
<dbReference type="HGNC" id="HGNC:13049">
    <property type="gene designation" value="ZNF256"/>
</dbReference>
<dbReference type="HPA" id="ENSG00000152454">
    <property type="expression patterns" value="Low tissue specificity"/>
</dbReference>
<dbReference type="MIM" id="606956">
    <property type="type" value="gene"/>
</dbReference>
<dbReference type="neXtProt" id="NX_Q9Y2P7"/>
<dbReference type="OpenTargets" id="ENSG00000152454"/>
<dbReference type="PharmGKB" id="PA37627"/>
<dbReference type="VEuPathDB" id="HostDB:ENSG00000152454"/>
<dbReference type="eggNOG" id="KOG1721">
    <property type="taxonomic scope" value="Eukaryota"/>
</dbReference>
<dbReference type="GeneTree" id="ENSGT00940000154734"/>
<dbReference type="HOGENOM" id="CLU_002678_55_2_1"/>
<dbReference type="InParanoid" id="Q9Y2P7"/>
<dbReference type="OMA" id="SRERCYM"/>
<dbReference type="OrthoDB" id="8922241at2759"/>
<dbReference type="PAN-GO" id="Q9Y2P7">
    <property type="GO annotations" value="4 GO annotations based on evolutionary models"/>
</dbReference>
<dbReference type="PhylomeDB" id="Q9Y2P7"/>
<dbReference type="TreeFam" id="TF339848"/>
<dbReference type="PathwayCommons" id="Q9Y2P7"/>
<dbReference type="Reactome" id="R-HSA-212436">
    <property type="pathway name" value="Generic Transcription Pathway"/>
</dbReference>
<dbReference type="SignaLink" id="Q9Y2P7"/>
<dbReference type="BioGRID-ORCS" id="10172">
    <property type="hits" value="13 hits in 1169 CRISPR screens"/>
</dbReference>
<dbReference type="GenomeRNAi" id="10172"/>
<dbReference type="Pharos" id="Q9Y2P7">
    <property type="development level" value="Tdark"/>
</dbReference>
<dbReference type="PRO" id="PR:Q9Y2P7"/>
<dbReference type="Proteomes" id="UP000005640">
    <property type="component" value="Chromosome 19"/>
</dbReference>
<dbReference type="RNAct" id="Q9Y2P7">
    <property type="molecule type" value="protein"/>
</dbReference>
<dbReference type="Bgee" id="ENSG00000152454">
    <property type="expression patterns" value="Expressed in oocyte and 120 other cell types or tissues"/>
</dbReference>
<dbReference type="ExpressionAtlas" id="Q9Y2P7">
    <property type="expression patterns" value="baseline and differential"/>
</dbReference>
<dbReference type="GO" id="GO:0005654">
    <property type="term" value="C:nucleoplasm"/>
    <property type="evidence" value="ECO:0000314"/>
    <property type="project" value="HPA"/>
</dbReference>
<dbReference type="GO" id="GO:0005634">
    <property type="term" value="C:nucleus"/>
    <property type="evidence" value="ECO:0000314"/>
    <property type="project" value="UniProtKB"/>
</dbReference>
<dbReference type="GO" id="GO:0000981">
    <property type="term" value="F:DNA-binding transcription factor activity, RNA polymerase II-specific"/>
    <property type="evidence" value="ECO:0000318"/>
    <property type="project" value="GO_Central"/>
</dbReference>
<dbReference type="GO" id="GO:0000978">
    <property type="term" value="F:RNA polymerase II cis-regulatory region sequence-specific DNA binding"/>
    <property type="evidence" value="ECO:0000318"/>
    <property type="project" value="GO_Central"/>
</dbReference>
<dbReference type="GO" id="GO:0008270">
    <property type="term" value="F:zinc ion binding"/>
    <property type="evidence" value="ECO:0007669"/>
    <property type="project" value="UniProtKB-KW"/>
</dbReference>
<dbReference type="GO" id="GO:0045892">
    <property type="term" value="P:negative regulation of DNA-templated transcription"/>
    <property type="evidence" value="ECO:0000314"/>
    <property type="project" value="UniProtKB"/>
</dbReference>
<dbReference type="GO" id="GO:0006357">
    <property type="term" value="P:regulation of transcription by RNA polymerase II"/>
    <property type="evidence" value="ECO:0000318"/>
    <property type="project" value="GO_Central"/>
</dbReference>
<dbReference type="CDD" id="cd07765">
    <property type="entry name" value="KRAB_A-box"/>
    <property type="match status" value="1"/>
</dbReference>
<dbReference type="FunFam" id="3.30.160.60:FF:001747">
    <property type="match status" value="1"/>
</dbReference>
<dbReference type="FunFam" id="3.30.160.60:FF:000139">
    <property type="entry name" value="zinc finger protein 1 homolog"/>
    <property type="match status" value="1"/>
</dbReference>
<dbReference type="FunFam" id="3.30.160.60:FF:000249">
    <property type="entry name" value="Zinc finger protein 154"/>
    <property type="match status" value="1"/>
</dbReference>
<dbReference type="FunFam" id="3.30.160.60:FF:001530">
    <property type="entry name" value="Zinc finger protein 268"/>
    <property type="match status" value="1"/>
</dbReference>
<dbReference type="FunFam" id="3.30.160.60:FF:002343">
    <property type="entry name" value="Zinc finger protein 33A"/>
    <property type="match status" value="3"/>
</dbReference>
<dbReference type="FunFam" id="3.30.160.60:FF:000135">
    <property type="entry name" value="Zinc finger protein 358"/>
    <property type="match status" value="4"/>
</dbReference>
<dbReference type="FunFam" id="3.30.160.60:FF:000098">
    <property type="entry name" value="Zinc finger protein 614"/>
    <property type="match status" value="1"/>
</dbReference>
<dbReference type="FunFam" id="3.30.160.60:FF:002863">
    <property type="entry name" value="Zinc finger protein 671"/>
    <property type="match status" value="1"/>
</dbReference>
<dbReference type="FunFam" id="3.30.160.60:FF:002604">
    <property type="entry name" value="Zinc finger protein 715"/>
    <property type="match status" value="1"/>
</dbReference>
<dbReference type="FunFam" id="3.30.160.60:FF:002770">
    <property type="entry name" value="ZNF256 isoform 1"/>
    <property type="match status" value="1"/>
</dbReference>
<dbReference type="Gene3D" id="6.10.140.140">
    <property type="match status" value="1"/>
</dbReference>
<dbReference type="Gene3D" id="3.30.160.60">
    <property type="entry name" value="Classic Zinc Finger"/>
    <property type="match status" value="15"/>
</dbReference>
<dbReference type="InterPro" id="IPR001909">
    <property type="entry name" value="KRAB"/>
</dbReference>
<dbReference type="InterPro" id="IPR036051">
    <property type="entry name" value="KRAB_dom_sf"/>
</dbReference>
<dbReference type="InterPro" id="IPR056436">
    <property type="entry name" value="Znf-C2H2_ZIC1-5/GLI1-3-like"/>
</dbReference>
<dbReference type="InterPro" id="IPR036236">
    <property type="entry name" value="Znf_C2H2_sf"/>
</dbReference>
<dbReference type="InterPro" id="IPR013087">
    <property type="entry name" value="Znf_C2H2_type"/>
</dbReference>
<dbReference type="PANTHER" id="PTHR23226">
    <property type="entry name" value="ZINC FINGER AND SCAN DOMAIN-CONTAINING"/>
    <property type="match status" value="1"/>
</dbReference>
<dbReference type="PANTHER" id="PTHR23226:SF85">
    <property type="entry name" value="ZINC FINGER PROTEIN 397"/>
    <property type="match status" value="1"/>
</dbReference>
<dbReference type="Pfam" id="PF01352">
    <property type="entry name" value="KRAB"/>
    <property type="match status" value="1"/>
</dbReference>
<dbReference type="Pfam" id="PF00096">
    <property type="entry name" value="zf-C2H2"/>
    <property type="match status" value="13"/>
</dbReference>
<dbReference type="Pfam" id="PF23561">
    <property type="entry name" value="zf-C2H2_15"/>
    <property type="match status" value="1"/>
</dbReference>
<dbReference type="SMART" id="SM00349">
    <property type="entry name" value="KRAB"/>
    <property type="match status" value="1"/>
</dbReference>
<dbReference type="SMART" id="SM00355">
    <property type="entry name" value="ZnF_C2H2"/>
    <property type="match status" value="15"/>
</dbReference>
<dbReference type="SUPFAM" id="SSF57667">
    <property type="entry name" value="beta-beta-alpha zinc fingers"/>
    <property type="match status" value="9"/>
</dbReference>
<dbReference type="SUPFAM" id="SSF109640">
    <property type="entry name" value="KRAB domain (Kruppel-associated box)"/>
    <property type="match status" value="1"/>
</dbReference>
<dbReference type="PROSITE" id="PS50805">
    <property type="entry name" value="KRAB"/>
    <property type="match status" value="1"/>
</dbReference>
<dbReference type="PROSITE" id="PS00028">
    <property type="entry name" value="ZINC_FINGER_C2H2_1"/>
    <property type="match status" value="15"/>
</dbReference>
<dbReference type="PROSITE" id="PS50157">
    <property type="entry name" value="ZINC_FINGER_C2H2_2"/>
    <property type="match status" value="15"/>
</dbReference>